<feature type="chain" id="PRO_1000024023" description="Dihydroorotase">
    <location>
        <begin position="1"/>
        <end position="344"/>
    </location>
</feature>
<feature type="active site" evidence="1">
    <location>
        <position position="247"/>
    </location>
</feature>
<feature type="binding site" evidence="1">
    <location>
        <position position="13"/>
    </location>
    <ligand>
        <name>Zn(2+)</name>
        <dbReference type="ChEBI" id="CHEBI:29105"/>
        <label>1</label>
    </ligand>
</feature>
<feature type="binding site" evidence="1">
    <location>
        <begin position="15"/>
        <end position="17"/>
    </location>
    <ligand>
        <name>substrate</name>
    </ligand>
</feature>
<feature type="binding site" evidence="1">
    <location>
        <position position="15"/>
    </location>
    <ligand>
        <name>Zn(2+)</name>
        <dbReference type="ChEBI" id="CHEBI:29105"/>
        <label>1</label>
    </ligand>
</feature>
<feature type="binding site" evidence="1">
    <location>
        <position position="41"/>
    </location>
    <ligand>
        <name>substrate</name>
    </ligand>
</feature>
<feature type="binding site" description="via carbamate group" evidence="1">
    <location>
        <position position="98"/>
    </location>
    <ligand>
        <name>Zn(2+)</name>
        <dbReference type="ChEBI" id="CHEBI:29105"/>
        <label>1</label>
    </ligand>
</feature>
<feature type="binding site" description="via carbamate group" evidence="1">
    <location>
        <position position="98"/>
    </location>
    <ligand>
        <name>Zn(2+)</name>
        <dbReference type="ChEBI" id="CHEBI:29105"/>
        <label>2</label>
    </ligand>
</feature>
<feature type="binding site" evidence="1">
    <location>
        <position position="135"/>
    </location>
    <ligand>
        <name>substrate</name>
    </ligand>
</feature>
<feature type="binding site" evidence="1">
    <location>
        <position position="135"/>
    </location>
    <ligand>
        <name>Zn(2+)</name>
        <dbReference type="ChEBI" id="CHEBI:29105"/>
        <label>2</label>
    </ligand>
</feature>
<feature type="binding site" evidence="1">
    <location>
        <position position="173"/>
    </location>
    <ligand>
        <name>Zn(2+)</name>
        <dbReference type="ChEBI" id="CHEBI:29105"/>
        <label>2</label>
    </ligand>
</feature>
<feature type="binding site" evidence="1">
    <location>
        <position position="218"/>
    </location>
    <ligand>
        <name>substrate</name>
    </ligand>
</feature>
<feature type="binding site" evidence="1">
    <location>
        <position position="247"/>
    </location>
    <ligand>
        <name>Zn(2+)</name>
        <dbReference type="ChEBI" id="CHEBI:29105"/>
        <label>1</label>
    </ligand>
</feature>
<feature type="binding site" evidence="1">
    <location>
        <position position="251"/>
    </location>
    <ligand>
        <name>substrate</name>
    </ligand>
</feature>
<feature type="binding site" evidence="1">
    <location>
        <position position="263"/>
    </location>
    <ligand>
        <name>substrate</name>
    </ligand>
</feature>
<feature type="modified residue" description="N6-carboxylysine" evidence="1">
    <location>
        <position position="98"/>
    </location>
</feature>
<sequence length="344" mass="37068">MQTLTIIRPDDMHLHLRDGDALKAVAPYTARQMGRAVIMPNLKPPVVSVADALAYKARIMAALPEGSAFEPLMTLYLTDQATPELVREAKAAGIVAFKLYPAGATTNSDSGVTDLFKLIPVLEEMAKQGILFLVHGEVTDPEIDIFDREAAFIGRVMKPVLAQVPNLKVVFEHITTAEAARLVLEAGDNVAATVTPQHLLLNRNDLLVGGVRPHHFCLPVLKRETHRQALVAAVTGEKAHKFFLGTDSAPHAKSAKENACGCAGMFSAMTAIELYAEVFEKAGALDKLEAFASKNGARFYGIPENADTITLVKQSQTVPASVPYGDGELVPMRAGGEIGWTVQY</sequence>
<proteinExistence type="inferred from homology"/>
<accession>Q5F9Y1</accession>
<dbReference type="EC" id="3.5.2.3" evidence="1"/>
<dbReference type="EMBL" id="AE004969">
    <property type="protein sequence ID" value="AAW89006.1"/>
    <property type="molecule type" value="Genomic_DNA"/>
</dbReference>
<dbReference type="RefSeq" id="WP_003706656.1">
    <property type="nucleotide sequence ID" value="NC_002946.2"/>
</dbReference>
<dbReference type="RefSeq" id="YP_207418.1">
    <property type="nucleotide sequence ID" value="NC_002946.2"/>
</dbReference>
<dbReference type="SMR" id="Q5F9Y1"/>
<dbReference type="STRING" id="242231.NGO_0255"/>
<dbReference type="MEROPS" id="M38.A02"/>
<dbReference type="KEGG" id="ngo:NGO_0255"/>
<dbReference type="PATRIC" id="fig|242231.10.peg.314"/>
<dbReference type="HOGENOM" id="CLU_041558_1_0_4"/>
<dbReference type="UniPathway" id="UPA00070">
    <property type="reaction ID" value="UER00117"/>
</dbReference>
<dbReference type="Proteomes" id="UP000000535">
    <property type="component" value="Chromosome"/>
</dbReference>
<dbReference type="GO" id="GO:0005737">
    <property type="term" value="C:cytoplasm"/>
    <property type="evidence" value="ECO:0007669"/>
    <property type="project" value="TreeGrafter"/>
</dbReference>
<dbReference type="GO" id="GO:0004151">
    <property type="term" value="F:dihydroorotase activity"/>
    <property type="evidence" value="ECO:0007669"/>
    <property type="project" value="UniProtKB-UniRule"/>
</dbReference>
<dbReference type="GO" id="GO:0008270">
    <property type="term" value="F:zinc ion binding"/>
    <property type="evidence" value="ECO:0007669"/>
    <property type="project" value="UniProtKB-UniRule"/>
</dbReference>
<dbReference type="GO" id="GO:0006207">
    <property type="term" value="P:'de novo' pyrimidine nucleobase biosynthetic process"/>
    <property type="evidence" value="ECO:0007669"/>
    <property type="project" value="TreeGrafter"/>
</dbReference>
<dbReference type="GO" id="GO:0044205">
    <property type="term" value="P:'de novo' UMP biosynthetic process"/>
    <property type="evidence" value="ECO:0007669"/>
    <property type="project" value="UniProtKB-UniRule"/>
</dbReference>
<dbReference type="CDD" id="cd01294">
    <property type="entry name" value="DHOase"/>
    <property type="match status" value="1"/>
</dbReference>
<dbReference type="FunFam" id="3.20.20.140:FF:000006">
    <property type="entry name" value="Dihydroorotase"/>
    <property type="match status" value="1"/>
</dbReference>
<dbReference type="Gene3D" id="3.20.20.140">
    <property type="entry name" value="Metal-dependent hydrolases"/>
    <property type="match status" value="1"/>
</dbReference>
<dbReference type="HAMAP" id="MF_00219">
    <property type="entry name" value="PyrC_classII"/>
    <property type="match status" value="1"/>
</dbReference>
<dbReference type="InterPro" id="IPR006680">
    <property type="entry name" value="Amidohydro-rel"/>
</dbReference>
<dbReference type="InterPro" id="IPR004721">
    <property type="entry name" value="DHOdimr"/>
</dbReference>
<dbReference type="InterPro" id="IPR002195">
    <property type="entry name" value="Dihydroorotase_CS"/>
</dbReference>
<dbReference type="InterPro" id="IPR032466">
    <property type="entry name" value="Metal_Hydrolase"/>
</dbReference>
<dbReference type="NCBIfam" id="TIGR00856">
    <property type="entry name" value="pyrC_dimer"/>
    <property type="match status" value="1"/>
</dbReference>
<dbReference type="PANTHER" id="PTHR43137">
    <property type="entry name" value="DIHYDROOROTASE"/>
    <property type="match status" value="1"/>
</dbReference>
<dbReference type="PANTHER" id="PTHR43137:SF1">
    <property type="entry name" value="DIHYDROOROTASE"/>
    <property type="match status" value="1"/>
</dbReference>
<dbReference type="Pfam" id="PF01979">
    <property type="entry name" value="Amidohydro_1"/>
    <property type="match status" value="1"/>
</dbReference>
<dbReference type="PIRSF" id="PIRSF001237">
    <property type="entry name" value="DHOdimr"/>
    <property type="match status" value="1"/>
</dbReference>
<dbReference type="SUPFAM" id="SSF51556">
    <property type="entry name" value="Metallo-dependent hydrolases"/>
    <property type="match status" value="1"/>
</dbReference>
<dbReference type="PROSITE" id="PS00482">
    <property type="entry name" value="DIHYDROOROTASE_1"/>
    <property type="match status" value="1"/>
</dbReference>
<dbReference type="PROSITE" id="PS00483">
    <property type="entry name" value="DIHYDROOROTASE_2"/>
    <property type="match status" value="1"/>
</dbReference>
<gene>
    <name evidence="1" type="primary">pyrC</name>
    <name type="ordered locus">NGO_0255</name>
</gene>
<evidence type="ECO:0000255" key="1">
    <source>
        <dbReference type="HAMAP-Rule" id="MF_00219"/>
    </source>
</evidence>
<organism>
    <name type="scientific">Neisseria gonorrhoeae (strain ATCC 700825 / FA 1090)</name>
    <dbReference type="NCBI Taxonomy" id="242231"/>
    <lineage>
        <taxon>Bacteria</taxon>
        <taxon>Pseudomonadati</taxon>
        <taxon>Pseudomonadota</taxon>
        <taxon>Betaproteobacteria</taxon>
        <taxon>Neisseriales</taxon>
        <taxon>Neisseriaceae</taxon>
        <taxon>Neisseria</taxon>
    </lineage>
</organism>
<name>PYRC_NEIG1</name>
<keyword id="KW-0378">Hydrolase</keyword>
<keyword id="KW-0479">Metal-binding</keyword>
<keyword id="KW-0665">Pyrimidine biosynthesis</keyword>
<keyword id="KW-1185">Reference proteome</keyword>
<keyword id="KW-0862">Zinc</keyword>
<reference key="1">
    <citation type="submission" date="2003-03" db="EMBL/GenBank/DDBJ databases">
        <title>The complete genome sequence of Neisseria gonorrhoeae.</title>
        <authorList>
            <person name="Lewis L.A."/>
            <person name="Gillaspy A.F."/>
            <person name="McLaughlin R.E."/>
            <person name="Gipson M."/>
            <person name="Ducey T.F."/>
            <person name="Ownbey T."/>
            <person name="Hartman K."/>
            <person name="Nydick C."/>
            <person name="Carson M.B."/>
            <person name="Vaughn J."/>
            <person name="Thomson C."/>
            <person name="Song L."/>
            <person name="Lin S."/>
            <person name="Yuan X."/>
            <person name="Najar F."/>
            <person name="Zhan M."/>
            <person name="Ren Q."/>
            <person name="Zhu H."/>
            <person name="Qi S."/>
            <person name="Kenton S.M."/>
            <person name="Lai H."/>
            <person name="White J.D."/>
            <person name="Clifton S."/>
            <person name="Roe B.A."/>
            <person name="Dyer D.W."/>
        </authorList>
    </citation>
    <scope>NUCLEOTIDE SEQUENCE [LARGE SCALE GENOMIC DNA]</scope>
    <source>
        <strain>ATCC 700825 / FA 1090</strain>
    </source>
</reference>
<protein>
    <recommendedName>
        <fullName evidence="1">Dihydroorotase</fullName>
        <shortName evidence="1">DHOase</shortName>
        <ecNumber evidence="1">3.5.2.3</ecNumber>
    </recommendedName>
</protein>
<comment type="function">
    <text evidence="1">Catalyzes the reversible cyclization of carbamoyl aspartate to dihydroorotate.</text>
</comment>
<comment type="catalytic activity">
    <reaction evidence="1">
        <text>(S)-dihydroorotate + H2O = N-carbamoyl-L-aspartate + H(+)</text>
        <dbReference type="Rhea" id="RHEA:24296"/>
        <dbReference type="ChEBI" id="CHEBI:15377"/>
        <dbReference type="ChEBI" id="CHEBI:15378"/>
        <dbReference type="ChEBI" id="CHEBI:30864"/>
        <dbReference type="ChEBI" id="CHEBI:32814"/>
        <dbReference type="EC" id="3.5.2.3"/>
    </reaction>
</comment>
<comment type="cofactor">
    <cofactor evidence="1">
        <name>Zn(2+)</name>
        <dbReference type="ChEBI" id="CHEBI:29105"/>
    </cofactor>
    <text evidence="1">Binds 2 Zn(2+) ions per subunit.</text>
</comment>
<comment type="pathway">
    <text evidence="1">Pyrimidine metabolism; UMP biosynthesis via de novo pathway; (S)-dihydroorotate from bicarbonate: step 3/3.</text>
</comment>
<comment type="subunit">
    <text evidence="1">Homodimer.</text>
</comment>
<comment type="similarity">
    <text evidence="1">Belongs to the metallo-dependent hydrolases superfamily. DHOase family. Class II DHOase subfamily.</text>
</comment>